<feature type="chain" id="PRO_0000373175" description="Protein MGF 100-2L">
    <location>
        <begin position="1"/>
        <end position="141"/>
    </location>
</feature>
<accession>P0C9F4</accession>
<organism>
    <name type="scientific">African swine fever virus (isolate Pig/Kenya/KEN-50/1950)</name>
    <name type="common">ASFV</name>
    <dbReference type="NCBI Taxonomy" id="561445"/>
    <lineage>
        <taxon>Viruses</taxon>
        <taxon>Varidnaviria</taxon>
        <taxon>Bamfordvirae</taxon>
        <taxon>Nucleocytoviricota</taxon>
        <taxon>Pokkesviricetes</taxon>
        <taxon>Asfuvirales</taxon>
        <taxon>Asfarviridae</taxon>
        <taxon>Asfivirus</taxon>
        <taxon>African swine fever virus</taxon>
    </lineage>
</organism>
<organismHost>
    <name type="scientific">Ornithodoros</name>
    <name type="common">relapsing fever ticks</name>
    <dbReference type="NCBI Taxonomy" id="6937"/>
</organismHost>
<organismHost>
    <name type="scientific">Phacochoerus aethiopicus</name>
    <name type="common">Warthog</name>
    <dbReference type="NCBI Taxonomy" id="85517"/>
</organismHost>
<organismHost>
    <name type="scientific">Phacochoerus africanus</name>
    <name type="common">Warthog</name>
    <dbReference type="NCBI Taxonomy" id="41426"/>
</organismHost>
<organismHost>
    <name type="scientific">Potamochoerus larvatus</name>
    <name type="common">Bushpig</name>
    <dbReference type="NCBI Taxonomy" id="273792"/>
</organismHost>
<organismHost>
    <name type="scientific">Sus scrofa</name>
    <name type="common">Pig</name>
    <dbReference type="NCBI Taxonomy" id="9823"/>
</organismHost>
<gene>
    <name type="ordered locus">Ken-162</name>
</gene>
<dbReference type="EMBL" id="AY261360">
    <property type="status" value="NOT_ANNOTATED_CDS"/>
    <property type="molecule type" value="Genomic_DNA"/>
</dbReference>
<dbReference type="SMR" id="P0C9F4"/>
<dbReference type="Proteomes" id="UP000000861">
    <property type="component" value="Segment"/>
</dbReference>
<protein>
    <recommendedName>
        <fullName>Protein MGF 100-2L</fullName>
    </recommendedName>
</protein>
<name>1002L_ASFK5</name>
<keyword id="KW-0244">Early protein</keyword>
<proteinExistence type="inferred from homology"/>
<sequence length="141" mass="16831">MGNKESKYLEMCSEEAWLNIPNIFKCIFIRKLFYNKWLKYQEKNLEKRLKLLSFYHPKKDFMGIRDMLDMAPGGSYFITDNVTEEFLMLVVKHPEDGSAEFTKLCLKGGCIVIDGFYYDDLHIFITENPNLYKYPLIHYDR</sequence>
<evidence type="ECO:0000250" key="1"/>
<evidence type="ECO:0000305" key="2"/>
<comment type="function">
    <text evidence="1">Plays a role in virus cell tropism, and may be required for efficient virus replication in macrophages.</text>
</comment>
<comment type="induction">
    <text evidence="2">Expressed in the early phase of the viral replicative cycle.</text>
</comment>
<comment type="similarity">
    <text evidence="2">Belongs to the asfivirus MGF 100 family.</text>
</comment>
<reference key="1">
    <citation type="submission" date="2003-03" db="EMBL/GenBank/DDBJ databases">
        <title>African swine fever virus genomes.</title>
        <authorList>
            <person name="Kutish G.F."/>
            <person name="Rock D.L."/>
        </authorList>
    </citation>
    <scope>NUCLEOTIDE SEQUENCE [LARGE SCALE GENOMIC DNA]</scope>
</reference>